<keyword id="KW-0614">Plasmid</keyword>
<feature type="chain" id="PRO_0000218343" description="Virulence plasmid protein pGP3-D">
    <location>
        <begin position="1"/>
        <end position="264"/>
    </location>
</feature>
<accession>Q46261</accession>
<geneLocation type="plasmid">
    <name>pCpA1</name>
</geneLocation>
<reference key="1">
    <citation type="journal article" date="1997" name="Microbiology">
        <title>Plasmid diversity in Chlamydia.</title>
        <authorList>
            <person name="Thomas N.S."/>
            <person name="Lusher M."/>
            <person name="Storey C.C."/>
            <person name="Clarke I.N."/>
        </authorList>
    </citation>
    <scope>NUCLEOTIDE SEQUENCE [GENOMIC DNA]</scope>
    <source>
        <strain>N352</strain>
    </source>
</reference>
<proteinExistence type="predicted"/>
<name>GP3D_CHLPS</name>
<sequence length="264" mass="28067">MGNSGFYLNDTQNCVFADNIKLGQMESPLQDQQLILGTKSTPTAAKLNAKEGLKIDISNTNAQSATIDFSIDADTLSKLILDQIQKGLVDAIIKDITNSLIQEVIDRIISDKNLALTKAFKNFSLSEKIQCNGLFTKSNIGTLLGGTEIGKFTITPDNVNSMFLISADIIASRMEGNVVLALVREGDSSPCAISYGYSSGIPNVCSLRTAVNNTGTDPVTFSLRVGGMDSGVVWVNALANGDSILGTTATSNISFLEVKQQTNG</sequence>
<organism>
    <name type="scientific">Chlamydia psittaci</name>
    <name type="common">Chlamydophila psittaci</name>
    <dbReference type="NCBI Taxonomy" id="83554"/>
    <lineage>
        <taxon>Bacteria</taxon>
        <taxon>Pseudomonadati</taxon>
        <taxon>Chlamydiota</taxon>
        <taxon>Chlamydiia</taxon>
        <taxon>Chlamydiales</taxon>
        <taxon>Chlamydiaceae</taxon>
        <taxon>Chlamydia/Chlamydophila group</taxon>
        <taxon>Chlamydia</taxon>
    </lineage>
</organism>
<dbReference type="EMBL" id="X62475">
    <property type="protein sequence ID" value="CAA44337.1"/>
    <property type="molecule type" value="Genomic_DNA"/>
</dbReference>
<dbReference type="PIR" id="S18146">
    <property type="entry name" value="E39999"/>
</dbReference>
<dbReference type="RefSeq" id="NP_052328.1">
    <property type="nucleotide sequence ID" value="NC_002117.1"/>
</dbReference>
<dbReference type="RefSeq" id="WP_006343676.1">
    <property type="nucleotide sequence ID" value="NC_002117.1"/>
</dbReference>
<dbReference type="SMR" id="Q46261"/>
<dbReference type="GeneID" id="12242271"/>
<dbReference type="OMA" id="MFLICAD"/>
<dbReference type="OrthoDB" id="17580at2"/>
<dbReference type="PRO" id="PR:Q46261"/>
<dbReference type="Gene3D" id="2.60.120.1340">
    <property type="match status" value="1"/>
</dbReference>
<dbReference type="Gene3D" id="6.10.250.2680">
    <property type="match status" value="1"/>
</dbReference>
<dbReference type="Gene3D" id="6.20.30.10">
    <property type="match status" value="1"/>
</dbReference>
<dbReference type="InterPro" id="IPR008444">
    <property type="entry name" value="Chlamydia_pGP3"/>
</dbReference>
<dbReference type="InterPro" id="IPR049000">
    <property type="entry name" value="PGP3-D_N"/>
</dbReference>
<dbReference type="InterPro" id="IPR033758">
    <property type="entry name" value="pGP3_C"/>
</dbReference>
<dbReference type="Pfam" id="PF05475">
    <property type="entry name" value="Chlam_vir"/>
    <property type="match status" value="1"/>
</dbReference>
<dbReference type="Pfam" id="PF20858">
    <property type="entry name" value="Pgp3_N"/>
    <property type="match status" value="1"/>
</dbReference>
<dbReference type="PIRSF" id="PIRSF016070">
    <property type="entry name" value="Chlamydia_vir"/>
    <property type="match status" value="1"/>
</dbReference>
<protein>
    <recommendedName>
        <fullName>Virulence plasmid protein pGP3-D</fullName>
    </recommendedName>
</protein>